<feature type="chain" id="PRO_0000259281" description="D-aminoacyl-tRNA deacylase">
    <location>
        <begin position="1"/>
        <end position="145"/>
    </location>
</feature>
<feature type="short sequence motif" description="Gly-cisPro motif, important for rejection of L-amino acids" evidence="1">
    <location>
        <begin position="137"/>
        <end position="138"/>
    </location>
</feature>
<organism>
    <name type="scientific">Escherichia coli (strain UTI89 / UPEC)</name>
    <dbReference type="NCBI Taxonomy" id="364106"/>
    <lineage>
        <taxon>Bacteria</taxon>
        <taxon>Pseudomonadati</taxon>
        <taxon>Pseudomonadota</taxon>
        <taxon>Gammaproteobacteria</taxon>
        <taxon>Enterobacterales</taxon>
        <taxon>Enterobacteriaceae</taxon>
        <taxon>Escherichia</taxon>
    </lineage>
</organism>
<accession>Q1R431</accession>
<dbReference type="EC" id="3.1.1.96" evidence="1"/>
<dbReference type="EMBL" id="CP000243">
    <property type="protein sequence ID" value="ABE09883.1"/>
    <property type="molecule type" value="Genomic_DNA"/>
</dbReference>
<dbReference type="RefSeq" id="WP_000560983.1">
    <property type="nucleotide sequence ID" value="NZ_CP064825.1"/>
</dbReference>
<dbReference type="SMR" id="Q1R431"/>
<dbReference type="GeneID" id="93778051"/>
<dbReference type="KEGG" id="eci:UTI89_C4471"/>
<dbReference type="HOGENOM" id="CLU_076901_1_0_6"/>
<dbReference type="Proteomes" id="UP000001952">
    <property type="component" value="Chromosome"/>
</dbReference>
<dbReference type="GO" id="GO:0005737">
    <property type="term" value="C:cytoplasm"/>
    <property type="evidence" value="ECO:0007669"/>
    <property type="project" value="UniProtKB-SubCell"/>
</dbReference>
<dbReference type="GO" id="GO:0051500">
    <property type="term" value="F:D-tyrosyl-tRNA(Tyr) deacylase activity"/>
    <property type="evidence" value="ECO:0007669"/>
    <property type="project" value="TreeGrafter"/>
</dbReference>
<dbReference type="GO" id="GO:0106026">
    <property type="term" value="F:Gly-tRNA(Ala) deacylase activity"/>
    <property type="evidence" value="ECO:0007669"/>
    <property type="project" value="UniProtKB-UniRule"/>
</dbReference>
<dbReference type="GO" id="GO:0043908">
    <property type="term" value="F:Ser(Gly)-tRNA(Ala) hydrolase activity"/>
    <property type="evidence" value="ECO:0007669"/>
    <property type="project" value="UniProtKB-UniRule"/>
</dbReference>
<dbReference type="GO" id="GO:0000049">
    <property type="term" value="F:tRNA binding"/>
    <property type="evidence" value="ECO:0007669"/>
    <property type="project" value="UniProtKB-UniRule"/>
</dbReference>
<dbReference type="GO" id="GO:0019478">
    <property type="term" value="P:D-amino acid catabolic process"/>
    <property type="evidence" value="ECO:0007669"/>
    <property type="project" value="UniProtKB-UniRule"/>
</dbReference>
<dbReference type="CDD" id="cd00563">
    <property type="entry name" value="Dtyr_deacylase"/>
    <property type="match status" value="1"/>
</dbReference>
<dbReference type="FunFam" id="3.50.80.10:FF:000001">
    <property type="entry name" value="D-aminoacyl-tRNA deacylase"/>
    <property type="match status" value="1"/>
</dbReference>
<dbReference type="Gene3D" id="3.50.80.10">
    <property type="entry name" value="D-tyrosyl-tRNA(Tyr) deacylase"/>
    <property type="match status" value="1"/>
</dbReference>
<dbReference type="HAMAP" id="MF_00518">
    <property type="entry name" value="Deacylase_Dtd"/>
    <property type="match status" value="1"/>
</dbReference>
<dbReference type="InterPro" id="IPR003732">
    <property type="entry name" value="Daa-tRNA_deacyls_DTD"/>
</dbReference>
<dbReference type="InterPro" id="IPR023509">
    <property type="entry name" value="DTD-like_sf"/>
</dbReference>
<dbReference type="NCBIfam" id="TIGR00256">
    <property type="entry name" value="D-aminoacyl-tRNA deacylase"/>
    <property type="match status" value="1"/>
</dbReference>
<dbReference type="PANTHER" id="PTHR10472:SF5">
    <property type="entry name" value="D-AMINOACYL-TRNA DEACYLASE 1"/>
    <property type="match status" value="1"/>
</dbReference>
<dbReference type="PANTHER" id="PTHR10472">
    <property type="entry name" value="D-TYROSYL-TRNA TYR DEACYLASE"/>
    <property type="match status" value="1"/>
</dbReference>
<dbReference type="Pfam" id="PF02580">
    <property type="entry name" value="Tyr_Deacylase"/>
    <property type="match status" value="1"/>
</dbReference>
<dbReference type="SUPFAM" id="SSF69500">
    <property type="entry name" value="DTD-like"/>
    <property type="match status" value="1"/>
</dbReference>
<name>DTD_ECOUT</name>
<evidence type="ECO:0000255" key="1">
    <source>
        <dbReference type="HAMAP-Rule" id="MF_00518"/>
    </source>
</evidence>
<reference key="1">
    <citation type="journal article" date="2006" name="Proc. Natl. Acad. Sci. U.S.A.">
        <title>Identification of genes subject to positive selection in uropathogenic strains of Escherichia coli: a comparative genomics approach.</title>
        <authorList>
            <person name="Chen S.L."/>
            <person name="Hung C.-S."/>
            <person name="Xu J."/>
            <person name="Reigstad C.S."/>
            <person name="Magrini V."/>
            <person name="Sabo A."/>
            <person name="Blasiar D."/>
            <person name="Bieri T."/>
            <person name="Meyer R.R."/>
            <person name="Ozersky P."/>
            <person name="Armstrong J.R."/>
            <person name="Fulton R.S."/>
            <person name="Latreille J.P."/>
            <person name="Spieth J."/>
            <person name="Hooton T.M."/>
            <person name="Mardis E.R."/>
            <person name="Hultgren S.J."/>
            <person name="Gordon J.I."/>
        </authorList>
    </citation>
    <scope>NUCLEOTIDE SEQUENCE [LARGE SCALE GENOMIC DNA]</scope>
    <source>
        <strain>UTI89 / UPEC</strain>
    </source>
</reference>
<proteinExistence type="inferred from homology"/>
<keyword id="KW-0963">Cytoplasm</keyword>
<keyword id="KW-0378">Hydrolase</keyword>
<keyword id="KW-0694">RNA-binding</keyword>
<keyword id="KW-0820">tRNA-binding</keyword>
<comment type="function">
    <text evidence="1">An aminoacyl-tRNA editing enzyme that deacylates mischarged D-aminoacyl-tRNAs. Also deacylates mischarged glycyl-tRNA(Ala), protecting cells against glycine mischarging by AlaRS. Acts via tRNA-based rather than protein-based catalysis; rejects L-amino acids rather than detecting D-amino acids in the active site. By recycling D-aminoacyl-tRNA to D-amino acids and free tRNA molecules, this enzyme counteracts the toxicity associated with the formation of D-aminoacyl-tRNA entities in vivo and helps enforce protein L-homochirality.</text>
</comment>
<comment type="catalytic activity">
    <reaction evidence="1">
        <text>glycyl-tRNA(Ala) + H2O = tRNA(Ala) + glycine + H(+)</text>
        <dbReference type="Rhea" id="RHEA:53744"/>
        <dbReference type="Rhea" id="RHEA-COMP:9657"/>
        <dbReference type="Rhea" id="RHEA-COMP:13640"/>
        <dbReference type="ChEBI" id="CHEBI:15377"/>
        <dbReference type="ChEBI" id="CHEBI:15378"/>
        <dbReference type="ChEBI" id="CHEBI:57305"/>
        <dbReference type="ChEBI" id="CHEBI:78442"/>
        <dbReference type="ChEBI" id="CHEBI:78522"/>
        <dbReference type="EC" id="3.1.1.96"/>
    </reaction>
</comment>
<comment type="catalytic activity">
    <reaction evidence="1">
        <text>a D-aminoacyl-tRNA + H2O = a tRNA + a D-alpha-amino acid + H(+)</text>
        <dbReference type="Rhea" id="RHEA:13953"/>
        <dbReference type="Rhea" id="RHEA-COMP:10123"/>
        <dbReference type="Rhea" id="RHEA-COMP:10124"/>
        <dbReference type="ChEBI" id="CHEBI:15377"/>
        <dbReference type="ChEBI" id="CHEBI:15378"/>
        <dbReference type="ChEBI" id="CHEBI:59871"/>
        <dbReference type="ChEBI" id="CHEBI:78442"/>
        <dbReference type="ChEBI" id="CHEBI:79333"/>
        <dbReference type="EC" id="3.1.1.96"/>
    </reaction>
</comment>
<comment type="subunit">
    <text evidence="1">Homodimer.</text>
</comment>
<comment type="subcellular location">
    <subcellularLocation>
        <location evidence="1">Cytoplasm</location>
    </subcellularLocation>
</comment>
<comment type="domain">
    <text evidence="1">A Gly-cisPro motif from one monomer fits into the active site of the other monomer to allow specific chiral rejection of L-amino acids.</text>
</comment>
<comment type="similarity">
    <text evidence="1">Belongs to the DTD family.</text>
</comment>
<sequence>MIALIQRVTRASVTVEGEVTGEIGAGLLVLLGVEKDDDEQKANRLCERVLGYRIFSDAEGKMNLNVQQAGGSVLVVSQFTLAADTERGMRPSFSKGASPDRAEALYDYFVERCRQQEMNTQTGRFAADMQVSLVNDGPVTFWLQV</sequence>
<gene>
    <name evidence="1" type="primary">dtd</name>
    <name type="ordered locus">UTI89_C4471</name>
</gene>
<protein>
    <recommendedName>
        <fullName evidence="1">D-aminoacyl-tRNA deacylase</fullName>
        <shortName evidence="1">DTD</shortName>
        <ecNumber evidence="1">3.1.1.96</ecNumber>
    </recommendedName>
    <alternativeName>
        <fullName evidence="1">Gly-tRNA(Ala) deacylase</fullName>
    </alternativeName>
</protein>